<keyword id="KW-0963">Cytoplasm</keyword>
<keyword id="KW-0324">Glycolysis</keyword>
<keyword id="KW-0456">Lyase</keyword>
<keyword id="KW-0460">Magnesium</keyword>
<keyword id="KW-0479">Metal-binding</keyword>
<keyword id="KW-0964">Secreted</keyword>
<sequence length="430" mass="45173">MIDSLDLVIDTIVAREVLDSRGNPTVEAEVLLEGGAMGRAIVPSGASTGAHEAHELRDGGDRYMGKGVGQAVNHIEERIATALCGLSALDQAAVDAAMLELDGSDNKSNLGANAILAVSMATARAAANGLGIPLYRYLGGPMANLLPVPLMNVINGGAHAANSLDFQEFMLVPHGAPSFREALRMGTEVFHTLKKLLSDKGMSTAVGDEGGFAPDLGNVEAGEILVEAISKAGYKPGEQISLALDVASTEFFENGRYAFDGGSYTSAEMVGQLEQLVEKFPIVSIEDGLAEDDWDGWKLLTERLGGKVQLVGDDLFVTNTKRLQQGIDSATANSILIKVNQIGSLTETLQAIDLAGRSGYTSVISHRSGETEDTTIADLSVATRAGQIKTGSLSRSERVAKYNQLLRIEDELGSQAVYAGAVGQGPRGKA</sequence>
<comment type="function">
    <text evidence="1">Catalyzes the reversible conversion of 2-phosphoglycerate (2-PG) into phosphoenolpyruvate (PEP). It is essential for the degradation of carbohydrates via glycolysis.</text>
</comment>
<comment type="catalytic activity">
    <reaction evidence="1">
        <text>(2R)-2-phosphoglycerate = phosphoenolpyruvate + H2O</text>
        <dbReference type="Rhea" id="RHEA:10164"/>
        <dbReference type="ChEBI" id="CHEBI:15377"/>
        <dbReference type="ChEBI" id="CHEBI:58289"/>
        <dbReference type="ChEBI" id="CHEBI:58702"/>
        <dbReference type="EC" id="4.2.1.11"/>
    </reaction>
</comment>
<comment type="cofactor">
    <cofactor evidence="1">
        <name>Mg(2+)</name>
        <dbReference type="ChEBI" id="CHEBI:18420"/>
    </cofactor>
    <text evidence="1">Binds a second Mg(2+) ion via substrate during catalysis.</text>
</comment>
<comment type="pathway">
    <text evidence="1">Carbohydrate degradation; glycolysis; pyruvate from D-glyceraldehyde 3-phosphate: step 4/5.</text>
</comment>
<comment type="subcellular location">
    <subcellularLocation>
        <location evidence="1">Cytoplasm</location>
    </subcellularLocation>
    <subcellularLocation>
        <location evidence="1">Secreted</location>
    </subcellularLocation>
    <subcellularLocation>
        <location evidence="1">Cell surface</location>
    </subcellularLocation>
    <text evidence="1">Fractions of enolase are present in both the cytoplasm and on the cell surface.</text>
</comment>
<comment type="similarity">
    <text evidence="1">Belongs to the enolase family.</text>
</comment>
<feature type="chain" id="PRO_0000267122" description="Enolase">
    <location>
        <begin position="1"/>
        <end position="430"/>
    </location>
</feature>
<feature type="active site" description="Proton donor" evidence="1">
    <location>
        <position position="209"/>
    </location>
</feature>
<feature type="active site" description="Proton acceptor" evidence="1">
    <location>
        <position position="338"/>
    </location>
</feature>
<feature type="binding site" evidence="1">
    <location>
        <position position="167"/>
    </location>
    <ligand>
        <name>(2R)-2-phosphoglycerate</name>
        <dbReference type="ChEBI" id="CHEBI:58289"/>
    </ligand>
</feature>
<feature type="binding site" evidence="1">
    <location>
        <position position="245"/>
    </location>
    <ligand>
        <name>Mg(2+)</name>
        <dbReference type="ChEBI" id="CHEBI:18420"/>
    </ligand>
</feature>
<feature type="binding site" evidence="1">
    <location>
        <position position="286"/>
    </location>
    <ligand>
        <name>Mg(2+)</name>
        <dbReference type="ChEBI" id="CHEBI:18420"/>
    </ligand>
</feature>
<feature type="binding site" evidence="1">
    <location>
        <position position="313"/>
    </location>
    <ligand>
        <name>Mg(2+)</name>
        <dbReference type="ChEBI" id="CHEBI:18420"/>
    </ligand>
</feature>
<feature type="binding site" evidence="1">
    <location>
        <position position="338"/>
    </location>
    <ligand>
        <name>(2R)-2-phosphoglycerate</name>
        <dbReference type="ChEBI" id="CHEBI:58289"/>
    </ligand>
</feature>
<feature type="binding site" evidence="1">
    <location>
        <position position="367"/>
    </location>
    <ligand>
        <name>(2R)-2-phosphoglycerate</name>
        <dbReference type="ChEBI" id="CHEBI:58289"/>
    </ligand>
</feature>
<feature type="binding site" evidence="1">
    <location>
        <position position="368"/>
    </location>
    <ligand>
        <name>(2R)-2-phosphoglycerate</name>
        <dbReference type="ChEBI" id="CHEBI:58289"/>
    </ligand>
</feature>
<feature type="binding site" evidence="1">
    <location>
        <position position="389"/>
    </location>
    <ligand>
        <name>(2R)-2-phosphoglycerate</name>
        <dbReference type="ChEBI" id="CHEBI:58289"/>
    </ligand>
</feature>
<organism>
    <name type="scientific">Synechococcus sp. (strain CC9605)</name>
    <dbReference type="NCBI Taxonomy" id="110662"/>
    <lineage>
        <taxon>Bacteria</taxon>
        <taxon>Bacillati</taxon>
        <taxon>Cyanobacteriota</taxon>
        <taxon>Cyanophyceae</taxon>
        <taxon>Synechococcales</taxon>
        <taxon>Synechococcaceae</taxon>
        <taxon>Synechococcus</taxon>
    </lineage>
</organism>
<proteinExistence type="inferred from homology"/>
<evidence type="ECO:0000255" key="1">
    <source>
        <dbReference type="HAMAP-Rule" id="MF_00318"/>
    </source>
</evidence>
<accession>Q3AGS4</accession>
<protein>
    <recommendedName>
        <fullName evidence="1">Enolase</fullName>
        <ecNumber evidence="1">4.2.1.11</ecNumber>
    </recommendedName>
    <alternativeName>
        <fullName evidence="1">2-phospho-D-glycerate hydro-lyase</fullName>
    </alternativeName>
    <alternativeName>
        <fullName evidence="1">2-phosphoglycerate dehydratase</fullName>
    </alternativeName>
</protein>
<name>ENO_SYNSC</name>
<reference key="1">
    <citation type="submission" date="2005-07" db="EMBL/GenBank/DDBJ databases">
        <title>Complete sequence of Synechococcus sp. CC9605.</title>
        <authorList>
            <consortium name="US DOE Joint Genome Institute"/>
            <person name="Copeland A."/>
            <person name="Lucas S."/>
            <person name="Lapidus A."/>
            <person name="Barry K."/>
            <person name="Detter J.C."/>
            <person name="Glavina T."/>
            <person name="Hammon N."/>
            <person name="Israni S."/>
            <person name="Pitluck S."/>
            <person name="Schmutz J."/>
            <person name="Martinez M."/>
            <person name="Larimer F."/>
            <person name="Land M."/>
            <person name="Kyrpides N."/>
            <person name="Ivanova N."/>
            <person name="Richardson P."/>
        </authorList>
    </citation>
    <scope>NUCLEOTIDE SEQUENCE [LARGE SCALE GENOMIC DNA]</scope>
    <source>
        <strain>CC9605</strain>
    </source>
</reference>
<gene>
    <name evidence="1" type="primary">eno</name>
    <name type="ordered locus">Syncc9605_2476</name>
</gene>
<dbReference type="EC" id="4.2.1.11" evidence="1"/>
<dbReference type="EMBL" id="CP000110">
    <property type="protein sequence ID" value="ABB36208.1"/>
    <property type="molecule type" value="Genomic_DNA"/>
</dbReference>
<dbReference type="RefSeq" id="WP_011365403.1">
    <property type="nucleotide sequence ID" value="NC_007516.1"/>
</dbReference>
<dbReference type="SMR" id="Q3AGS4"/>
<dbReference type="STRING" id="110662.Syncc9605_2476"/>
<dbReference type="KEGG" id="syd:Syncc9605_2476"/>
<dbReference type="eggNOG" id="COG0148">
    <property type="taxonomic scope" value="Bacteria"/>
</dbReference>
<dbReference type="HOGENOM" id="CLU_031223_2_1_3"/>
<dbReference type="OrthoDB" id="9804716at2"/>
<dbReference type="UniPathway" id="UPA00109">
    <property type="reaction ID" value="UER00187"/>
</dbReference>
<dbReference type="GO" id="GO:0009986">
    <property type="term" value="C:cell surface"/>
    <property type="evidence" value="ECO:0007669"/>
    <property type="project" value="UniProtKB-SubCell"/>
</dbReference>
<dbReference type="GO" id="GO:0005576">
    <property type="term" value="C:extracellular region"/>
    <property type="evidence" value="ECO:0007669"/>
    <property type="project" value="UniProtKB-SubCell"/>
</dbReference>
<dbReference type="GO" id="GO:0000015">
    <property type="term" value="C:phosphopyruvate hydratase complex"/>
    <property type="evidence" value="ECO:0007669"/>
    <property type="project" value="InterPro"/>
</dbReference>
<dbReference type="GO" id="GO:0000287">
    <property type="term" value="F:magnesium ion binding"/>
    <property type="evidence" value="ECO:0007669"/>
    <property type="project" value="UniProtKB-UniRule"/>
</dbReference>
<dbReference type="GO" id="GO:0004634">
    <property type="term" value="F:phosphopyruvate hydratase activity"/>
    <property type="evidence" value="ECO:0007669"/>
    <property type="project" value="UniProtKB-UniRule"/>
</dbReference>
<dbReference type="GO" id="GO:0006096">
    <property type="term" value="P:glycolytic process"/>
    <property type="evidence" value="ECO:0007669"/>
    <property type="project" value="UniProtKB-UniRule"/>
</dbReference>
<dbReference type="CDD" id="cd03313">
    <property type="entry name" value="enolase"/>
    <property type="match status" value="1"/>
</dbReference>
<dbReference type="FunFam" id="3.20.20.120:FF:000001">
    <property type="entry name" value="Enolase"/>
    <property type="match status" value="1"/>
</dbReference>
<dbReference type="FunFam" id="3.30.390.10:FF:000001">
    <property type="entry name" value="Enolase"/>
    <property type="match status" value="1"/>
</dbReference>
<dbReference type="Gene3D" id="3.20.20.120">
    <property type="entry name" value="Enolase-like C-terminal domain"/>
    <property type="match status" value="1"/>
</dbReference>
<dbReference type="Gene3D" id="3.30.390.10">
    <property type="entry name" value="Enolase-like, N-terminal domain"/>
    <property type="match status" value="1"/>
</dbReference>
<dbReference type="HAMAP" id="MF_00318">
    <property type="entry name" value="Enolase"/>
    <property type="match status" value="1"/>
</dbReference>
<dbReference type="InterPro" id="IPR000941">
    <property type="entry name" value="Enolase"/>
</dbReference>
<dbReference type="InterPro" id="IPR036849">
    <property type="entry name" value="Enolase-like_C_sf"/>
</dbReference>
<dbReference type="InterPro" id="IPR029017">
    <property type="entry name" value="Enolase-like_N"/>
</dbReference>
<dbReference type="InterPro" id="IPR020810">
    <property type="entry name" value="Enolase_C"/>
</dbReference>
<dbReference type="InterPro" id="IPR020809">
    <property type="entry name" value="Enolase_CS"/>
</dbReference>
<dbReference type="InterPro" id="IPR020811">
    <property type="entry name" value="Enolase_N"/>
</dbReference>
<dbReference type="NCBIfam" id="TIGR01060">
    <property type="entry name" value="eno"/>
    <property type="match status" value="1"/>
</dbReference>
<dbReference type="PANTHER" id="PTHR11902">
    <property type="entry name" value="ENOLASE"/>
    <property type="match status" value="1"/>
</dbReference>
<dbReference type="PANTHER" id="PTHR11902:SF1">
    <property type="entry name" value="ENOLASE"/>
    <property type="match status" value="1"/>
</dbReference>
<dbReference type="Pfam" id="PF00113">
    <property type="entry name" value="Enolase_C"/>
    <property type="match status" value="1"/>
</dbReference>
<dbReference type="Pfam" id="PF03952">
    <property type="entry name" value="Enolase_N"/>
    <property type="match status" value="1"/>
</dbReference>
<dbReference type="PIRSF" id="PIRSF001400">
    <property type="entry name" value="Enolase"/>
    <property type="match status" value="1"/>
</dbReference>
<dbReference type="PRINTS" id="PR00148">
    <property type="entry name" value="ENOLASE"/>
</dbReference>
<dbReference type="SFLD" id="SFLDF00002">
    <property type="entry name" value="enolase"/>
    <property type="match status" value="1"/>
</dbReference>
<dbReference type="SFLD" id="SFLDG00178">
    <property type="entry name" value="enolase"/>
    <property type="match status" value="1"/>
</dbReference>
<dbReference type="SMART" id="SM01192">
    <property type="entry name" value="Enolase_C"/>
    <property type="match status" value="1"/>
</dbReference>
<dbReference type="SMART" id="SM01193">
    <property type="entry name" value="Enolase_N"/>
    <property type="match status" value="1"/>
</dbReference>
<dbReference type="SUPFAM" id="SSF51604">
    <property type="entry name" value="Enolase C-terminal domain-like"/>
    <property type="match status" value="1"/>
</dbReference>
<dbReference type="SUPFAM" id="SSF54826">
    <property type="entry name" value="Enolase N-terminal domain-like"/>
    <property type="match status" value="1"/>
</dbReference>
<dbReference type="PROSITE" id="PS00164">
    <property type="entry name" value="ENOLASE"/>
    <property type="match status" value="1"/>
</dbReference>